<reference key="1">
    <citation type="journal article" date="2009" name="J. Bacteriol.">
        <title>Role of conjugative elements in the evolution of the multidrug-resistant pandemic clone Streptococcus pneumoniae Spain23F ST81.</title>
        <authorList>
            <person name="Croucher N.J."/>
            <person name="Walker D."/>
            <person name="Romero P."/>
            <person name="Lennard N."/>
            <person name="Paterson G.K."/>
            <person name="Bason N.C."/>
            <person name="Mitchell A.M."/>
            <person name="Quail M.A."/>
            <person name="Andrew P.W."/>
            <person name="Parkhill J."/>
            <person name="Bentley S.D."/>
            <person name="Mitchell T.J."/>
        </authorList>
    </citation>
    <scope>NUCLEOTIDE SEQUENCE [LARGE SCALE GENOMIC DNA]</scope>
    <source>
        <strain>ATCC 700669 / Spain 23F-1</strain>
    </source>
</reference>
<keyword id="KW-1003">Cell membrane</keyword>
<keyword id="KW-0413">Isomerase</keyword>
<keyword id="KW-0449">Lipoprotein</keyword>
<keyword id="KW-0472">Membrane</keyword>
<keyword id="KW-0564">Palmitate</keyword>
<keyword id="KW-0697">Rotamase</keyword>
<keyword id="KW-0732">Signal</keyword>
<proteinExistence type="inferred from homology"/>
<comment type="function">
    <text evidence="1">Plays a major role in protein secretion by helping the post-translocational extracellular folding of several secreted proteins.</text>
</comment>
<comment type="catalytic activity">
    <reaction evidence="1">
        <text>[protein]-peptidylproline (omega=180) = [protein]-peptidylproline (omega=0)</text>
        <dbReference type="Rhea" id="RHEA:16237"/>
        <dbReference type="Rhea" id="RHEA-COMP:10747"/>
        <dbReference type="Rhea" id="RHEA-COMP:10748"/>
        <dbReference type="ChEBI" id="CHEBI:83833"/>
        <dbReference type="ChEBI" id="CHEBI:83834"/>
        <dbReference type="EC" id="5.2.1.8"/>
    </reaction>
</comment>
<comment type="subcellular location">
    <subcellularLocation>
        <location evidence="1">Cell membrane</location>
        <topology evidence="1">Lipid-anchor</topology>
    </subcellularLocation>
</comment>
<comment type="similarity">
    <text evidence="1">Belongs to the PrsA family.</text>
</comment>
<protein>
    <recommendedName>
        <fullName evidence="1">Foldase protein PrsA</fullName>
        <ecNumber evidence="1">5.2.1.8</ecNumber>
    </recommendedName>
</protein>
<sequence>MKKKLLAGAITLLSVATLAACSKGSEGADLISMKGDVITEHQFYEQVKNNPSAQQVLLNMTIQKVFEKQYGSELDDKEVDDTIAEEKKQYGENYQRVLSQAGMTLETRKAQIRTSKLVELAVKKVAEAELTDEAYKKAFDEYTPDVTAQIIRLNNEDKAKEVLEKAKAEGADFAQLAKDNSTDEKTKENGGEITFDSASTEVPEQVKKAAFALDVDGVSDVITATGTQAYSSQYYIVKLTKKTEKSSNIDDYKEKLKTVILTQKQNDSTFVQSIIGKELQAANIKVKDQAFQNIFTQYIGGGDSSSSSSTSNE</sequence>
<feature type="signal peptide" evidence="1">
    <location>
        <begin position="1"/>
        <end position="20"/>
    </location>
</feature>
<feature type="chain" id="PRO_1000164116" description="Foldase protein PrsA">
    <location>
        <begin position="21"/>
        <end position="313"/>
    </location>
</feature>
<feature type="domain" description="PpiC" evidence="1">
    <location>
        <begin position="143"/>
        <end position="241"/>
    </location>
</feature>
<feature type="lipid moiety-binding region" description="N-palmitoyl cysteine" evidence="1">
    <location>
        <position position="21"/>
    </location>
</feature>
<feature type="lipid moiety-binding region" description="S-diacylglycerol cysteine" evidence="1">
    <location>
        <position position="21"/>
    </location>
</feature>
<evidence type="ECO:0000255" key="1">
    <source>
        <dbReference type="HAMAP-Rule" id="MF_01145"/>
    </source>
</evidence>
<name>PRSA_STRPJ</name>
<dbReference type="EC" id="5.2.1.8" evidence="1"/>
<dbReference type="EMBL" id="FM211187">
    <property type="protein sequence ID" value="CAR68731.1"/>
    <property type="molecule type" value="Genomic_DNA"/>
</dbReference>
<dbReference type="RefSeq" id="WP_000727935.1">
    <property type="nucleotide sequence ID" value="NC_011900.1"/>
</dbReference>
<dbReference type="SMR" id="B8ZPD9"/>
<dbReference type="KEGG" id="sne:SPN23F09050"/>
<dbReference type="HOGENOM" id="CLU_034646_6_0_9"/>
<dbReference type="GO" id="GO:0005886">
    <property type="term" value="C:plasma membrane"/>
    <property type="evidence" value="ECO:0007669"/>
    <property type="project" value="UniProtKB-SubCell"/>
</dbReference>
<dbReference type="GO" id="GO:0003755">
    <property type="term" value="F:peptidyl-prolyl cis-trans isomerase activity"/>
    <property type="evidence" value="ECO:0007669"/>
    <property type="project" value="UniProtKB-UniRule"/>
</dbReference>
<dbReference type="GO" id="GO:0006457">
    <property type="term" value="P:protein folding"/>
    <property type="evidence" value="ECO:0007669"/>
    <property type="project" value="UniProtKB-UniRule"/>
</dbReference>
<dbReference type="Gene3D" id="3.10.50.40">
    <property type="match status" value="1"/>
</dbReference>
<dbReference type="HAMAP" id="MF_01145">
    <property type="entry name" value="Foldase_PrsA"/>
    <property type="match status" value="1"/>
</dbReference>
<dbReference type="InterPro" id="IPR023059">
    <property type="entry name" value="Foldase_PrsA"/>
</dbReference>
<dbReference type="InterPro" id="IPR046357">
    <property type="entry name" value="PPIase_dom_sf"/>
</dbReference>
<dbReference type="InterPro" id="IPR000297">
    <property type="entry name" value="PPIase_PpiC"/>
</dbReference>
<dbReference type="InterPro" id="IPR050245">
    <property type="entry name" value="PrsA_foldase"/>
</dbReference>
<dbReference type="InterPro" id="IPR027304">
    <property type="entry name" value="Trigger_fact/SurA_dom_sf"/>
</dbReference>
<dbReference type="NCBIfam" id="NF002361">
    <property type="entry name" value="PRK01326.1"/>
    <property type="match status" value="1"/>
</dbReference>
<dbReference type="PANTHER" id="PTHR47245:SF1">
    <property type="entry name" value="FOLDASE PROTEIN PRSA"/>
    <property type="match status" value="1"/>
</dbReference>
<dbReference type="PANTHER" id="PTHR47245">
    <property type="entry name" value="PEPTIDYLPROLYL ISOMERASE"/>
    <property type="match status" value="1"/>
</dbReference>
<dbReference type="Pfam" id="PF00639">
    <property type="entry name" value="Rotamase"/>
    <property type="match status" value="1"/>
</dbReference>
<dbReference type="SUPFAM" id="SSF54534">
    <property type="entry name" value="FKBP-like"/>
    <property type="match status" value="1"/>
</dbReference>
<dbReference type="SUPFAM" id="SSF109998">
    <property type="entry name" value="Triger factor/SurA peptide-binding domain-like"/>
    <property type="match status" value="1"/>
</dbReference>
<dbReference type="PROSITE" id="PS50198">
    <property type="entry name" value="PPIC_PPIASE_2"/>
    <property type="match status" value="1"/>
</dbReference>
<dbReference type="PROSITE" id="PS51257">
    <property type="entry name" value="PROKAR_LIPOPROTEIN"/>
    <property type="match status" value="1"/>
</dbReference>
<gene>
    <name evidence="1" type="primary">prsA</name>
    <name type="ordered locus">SPN23F09050</name>
</gene>
<accession>B8ZPD9</accession>
<organism>
    <name type="scientific">Streptococcus pneumoniae (strain ATCC 700669 / Spain 23F-1)</name>
    <dbReference type="NCBI Taxonomy" id="561276"/>
    <lineage>
        <taxon>Bacteria</taxon>
        <taxon>Bacillati</taxon>
        <taxon>Bacillota</taxon>
        <taxon>Bacilli</taxon>
        <taxon>Lactobacillales</taxon>
        <taxon>Streptococcaceae</taxon>
        <taxon>Streptococcus</taxon>
    </lineage>
</organism>